<sequence>MQGTPTMKIIENILKNHLLQPLSQNIFVLTNNYITEVQKFSPLSKNTNLVVGQILNFQKIQDSQKLNLVEVNIGIKVVKIVCGASNLQNGKKVIVASEGSFLEGINSTLKNKKIYGVFSEGMLCALEELGISNKFLTPQEQEGIYLFDDPNDQIALGSNALIPLGMDGFILELGITPNRGDLLSHIGFAKDLQAVLASQNSNKKKEKKTINYKTKNSKDQTNRKTTPKLNPDFFAKLPQSPLKVQIESDSCYEYNVCILENITIKPSPLWLRNTLLQSGINPINNVVDITNLILIEYGIPLHAFDSGTIQKIKVRKAFPQETITTLNQNDFVLDENDLVITDGKKAIALAGIVGLLESSIKPTTTKIILEAAYFSPQTIAQTCQKLKNKTESSLRFERGIDQNLIPLAFQKACQLLVTLANAKITYQPTITKQKIRTNPTISLDLDFITRKIGFSLCPTQIKNWLLNLDYQIHTPKNLTLQNKNEQLNLQAPLRRYDVKIKEDVISDLTRFYGCHKLPPQTIQIPTQGKLTLKQKNIRELRKLLVNLGFYETITYSLISSEMFEAFAPQKPFIKIMNPLSQDKMILRQSLLSSLVEILSYQHKRQTFDTAFFEIGKAYFPNQEKLSLAFVLSGNFLNTLWHKQDVSSSFFVTKGILEKISSFLGITLTYQKTQKHSNFHPGMQANLLFNNQIIGVIGKTHPQLNAKHHLKESFLCELFLSDEILNTTKTLTFRPIPKFPTVIRDLSFLVDTKYSFYQIEQIIKQTTPFDLIKCELFDVYQTPTTKEKQSFALRFFFNNLDKNLEKQDVEHCMKKITYNLIKHFRIEIR</sequence>
<feature type="chain" id="PRO_0000232796" description="Phenylalanine--tRNA ligase beta subunit">
    <location>
        <begin position="1"/>
        <end position="828"/>
    </location>
</feature>
<feature type="domain" description="tRNA-binding" evidence="1">
    <location>
        <begin position="43"/>
        <end position="161"/>
    </location>
</feature>
<feature type="domain" description="B5" evidence="1">
    <location>
        <begin position="436"/>
        <end position="519"/>
    </location>
</feature>
<feature type="domain" description="FDX-ACB" evidence="1">
    <location>
        <begin position="736"/>
        <end position="828"/>
    </location>
</feature>
<feature type="region of interest" description="Disordered" evidence="2">
    <location>
        <begin position="203"/>
        <end position="230"/>
    </location>
</feature>
<feature type="binding site" evidence="1">
    <location>
        <position position="497"/>
    </location>
    <ligand>
        <name>Mg(2+)</name>
        <dbReference type="ChEBI" id="CHEBI:18420"/>
        <note>shared with alpha subunit</note>
    </ligand>
</feature>
<feature type="binding site" evidence="1">
    <location>
        <position position="503"/>
    </location>
    <ligand>
        <name>Mg(2+)</name>
        <dbReference type="ChEBI" id="CHEBI:18420"/>
        <note>shared with alpha subunit</note>
    </ligand>
</feature>
<feature type="binding site" evidence="1">
    <location>
        <position position="507"/>
    </location>
    <ligand>
        <name>Mg(2+)</name>
        <dbReference type="ChEBI" id="CHEBI:18420"/>
        <note>shared with alpha subunit</note>
    </ligand>
</feature>
<accession>Q2NJZ2</accession>
<protein>
    <recommendedName>
        <fullName evidence="1">Phenylalanine--tRNA ligase beta subunit</fullName>
        <ecNumber evidence="1">6.1.1.20</ecNumber>
    </recommendedName>
    <alternativeName>
        <fullName evidence="1">Phenylalanyl-tRNA synthetase beta subunit</fullName>
        <shortName evidence="1">PheRS</shortName>
    </alternativeName>
</protein>
<comment type="catalytic activity">
    <reaction evidence="1">
        <text>tRNA(Phe) + L-phenylalanine + ATP = L-phenylalanyl-tRNA(Phe) + AMP + diphosphate + H(+)</text>
        <dbReference type="Rhea" id="RHEA:19413"/>
        <dbReference type="Rhea" id="RHEA-COMP:9668"/>
        <dbReference type="Rhea" id="RHEA-COMP:9699"/>
        <dbReference type="ChEBI" id="CHEBI:15378"/>
        <dbReference type="ChEBI" id="CHEBI:30616"/>
        <dbReference type="ChEBI" id="CHEBI:33019"/>
        <dbReference type="ChEBI" id="CHEBI:58095"/>
        <dbReference type="ChEBI" id="CHEBI:78442"/>
        <dbReference type="ChEBI" id="CHEBI:78531"/>
        <dbReference type="ChEBI" id="CHEBI:456215"/>
        <dbReference type="EC" id="6.1.1.20"/>
    </reaction>
</comment>
<comment type="cofactor">
    <cofactor evidence="1">
        <name>Mg(2+)</name>
        <dbReference type="ChEBI" id="CHEBI:18420"/>
    </cofactor>
    <text evidence="1">Binds 2 magnesium ions per tetramer.</text>
</comment>
<comment type="subunit">
    <text evidence="1">Tetramer of two alpha and two beta subunits.</text>
</comment>
<comment type="subcellular location">
    <subcellularLocation>
        <location evidence="1">Cytoplasm</location>
    </subcellularLocation>
</comment>
<comment type="similarity">
    <text evidence="1">Belongs to the phenylalanyl-tRNA synthetase beta subunit family. Type 1 subfamily.</text>
</comment>
<comment type="caution">
    <text evidence="3">Lacks the conserved glutamate residue in position 506 that binds magnesium; it is replaced by a serine residue.</text>
</comment>
<keyword id="KW-0030">Aminoacyl-tRNA synthetase</keyword>
<keyword id="KW-0067">ATP-binding</keyword>
<keyword id="KW-0963">Cytoplasm</keyword>
<keyword id="KW-0436">Ligase</keyword>
<keyword id="KW-0460">Magnesium</keyword>
<keyword id="KW-0479">Metal-binding</keyword>
<keyword id="KW-0547">Nucleotide-binding</keyword>
<keyword id="KW-0648">Protein biosynthesis</keyword>
<keyword id="KW-0694">RNA-binding</keyword>
<keyword id="KW-0820">tRNA-binding</keyword>
<reference key="1">
    <citation type="journal article" date="2006" name="J. Bacteriol.">
        <title>Living with genome instability: the adaptation of phytoplasmas to diverse environments of their insect and plant hosts.</title>
        <authorList>
            <person name="Bai X."/>
            <person name="Zhang J."/>
            <person name="Ewing A."/>
            <person name="Miller S.A."/>
            <person name="Jancso Radek A."/>
            <person name="Shevchenko D.V."/>
            <person name="Tsukerman K."/>
            <person name="Walunas T."/>
            <person name="Lapidus A."/>
            <person name="Campbell J.W."/>
            <person name="Hogenhout S.A."/>
        </authorList>
    </citation>
    <scope>NUCLEOTIDE SEQUENCE [LARGE SCALE GENOMIC DNA]</scope>
    <source>
        <strain>AYWB</strain>
    </source>
</reference>
<organism>
    <name type="scientific">Aster yellows witches'-broom phytoplasma (strain AYWB)</name>
    <dbReference type="NCBI Taxonomy" id="322098"/>
    <lineage>
        <taxon>Bacteria</taxon>
        <taxon>Bacillati</taxon>
        <taxon>Mycoplasmatota</taxon>
        <taxon>Mollicutes</taxon>
        <taxon>Acholeplasmatales</taxon>
        <taxon>Acholeplasmataceae</taxon>
        <taxon>Candidatus Phytoplasma</taxon>
        <taxon>16SrI (Aster yellows group)</taxon>
    </lineage>
</organism>
<dbReference type="EC" id="6.1.1.20" evidence="1"/>
<dbReference type="EMBL" id="CP000061">
    <property type="protein sequence ID" value="ABC65251.1"/>
    <property type="molecule type" value="Genomic_DNA"/>
</dbReference>
<dbReference type="SMR" id="Q2NJZ2"/>
<dbReference type="STRING" id="322098.AYWB_134"/>
<dbReference type="KEGG" id="ayw:AYWB_134"/>
<dbReference type="eggNOG" id="COG0072">
    <property type="taxonomic scope" value="Bacteria"/>
</dbReference>
<dbReference type="eggNOG" id="COG0073">
    <property type="taxonomic scope" value="Bacteria"/>
</dbReference>
<dbReference type="HOGENOM" id="CLU_016891_0_0_14"/>
<dbReference type="PhylomeDB" id="Q2NJZ2"/>
<dbReference type="Proteomes" id="UP000001934">
    <property type="component" value="Chromosome"/>
</dbReference>
<dbReference type="GO" id="GO:0009328">
    <property type="term" value="C:phenylalanine-tRNA ligase complex"/>
    <property type="evidence" value="ECO:0007669"/>
    <property type="project" value="TreeGrafter"/>
</dbReference>
<dbReference type="GO" id="GO:0005524">
    <property type="term" value="F:ATP binding"/>
    <property type="evidence" value="ECO:0007669"/>
    <property type="project" value="UniProtKB-UniRule"/>
</dbReference>
<dbReference type="GO" id="GO:0000287">
    <property type="term" value="F:magnesium ion binding"/>
    <property type="evidence" value="ECO:0007669"/>
    <property type="project" value="UniProtKB-UniRule"/>
</dbReference>
<dbReference type="GO" id="GO:0004826">
    <property type="term" value="F:phenylalanine-tRNA ligase activity"/>
    <property type="evidence" value="ECO:0007669"/>
    <property type="project" value="UniProtKB-UniRule"/>
</dbReference>
<dbReference type="GO" id="GO:0000049">
    <property type="term" value="F:tRNA binding"/>
    <property type="evidence" value="ECO:0007669"/>
    <property type="project" value="UniProtKB-KW"/>
</dbReference>
<dbReference type="GO" id="GO:0006432">
    <property type="term" value="P:phenylalanyl-tRNA aminoacylation"/>
    <property type="evidence" value="ECO:0007669"/>
    <property type="project" value="UniProtKB-UniRule"/>
</dbReference>
<dbReference type="CDD" id="cd00769">
    <property type="entry name" value="PheRS_beta_core"/>
    <property type="match status" value="1"/>
</dbReference>
<dbReference type="CDD" id="cd02796">
    <property type="entry name" value="tRNA_bind_bactPheRS"/>
    <property type="match status" value="1"/>
</dbReference>
<dbReference type="Gene3D" id="3.30.56.10">
    <property type="match status" value="2"/>
</dbReference>
<dbReference type="Gene3D" id="3.30.930.10">
    <property type="entry name" value="Bira Bifunctional Protein, Domain 2"/>
    <property type="match status" value="1"/>
</dbReference>
<dbReference type="Gene3D" id="3.30.70.380">
    <property type="entry name" value="Ferrodoxin-fold anticodon-binding domain"/>
    <property type="match status" value="1"/>
</dbReference>
<dbReference type="Gene3D" id="2.40.50.140">
    <property type="entry name" value="Nucleic acid-binding proteins"/>
    <property type="match status" value="1"/>
</dbReference>
<dbReference type="Gene3D" id="3.50.40.10">
    <property type="entry name" value="Phenylalanyl-trna Synthetase, Chain B, domain 3"/>
    <property type="match status" value="1"/>
</dbReference>
<dbReference type="HAMAP" id="MF_00283">
    <property type="entry name" value="Phe_tRNA_synth_beta1"/>
    <property type="match status" value="1"/>
</dbReference>
<dbReference type="InterPro" id="IPR045864">
    <property type="entry name" value="aa-tRNA-synth_II/BPL/LPL"/>
</dbReference>
<dbReference type="InterPro" id="IPR005146">
    <property type="entry name" value="B3/B4_tRNA-bd"/>
</dbReference>
<dbReference type="InterPro" id="IPR009061">
    <property type="entry name" value="DNA-bd_dom_put_sf"/>
</dbReference>
<dbReference type="InterPro" id="IPR005121">
    <property type="entry name" value="Fdx_antiC-bd"/>
</dbReference>
<dbReference type="InterPro" id="IPR036690">
    <property type="entry name" value="Fdx_antiC-bd_sf"/>
</dbReference>
<dbReference type="InterPro" id="IPR012340">
    <property type="entry name" value="NA-bd_OB-fold"/>
</dbReference>
<dbReference type="InterPro" id="IPR045060">
    <property type="entry name" value="Phe-tRNA-ligase_IIc_bsu"/>
</dbReference>
<dbReference type="InterPro" id="IPR004532">
    <property type="entry name" value="Phe-tRNA-ligase_IIc_bsu_bact"/>
</dbReference>
<dbReference type="InterPro" id="IPR020825">
    <property type="entry name" value="Phe-tRNA_synthase-like_B3/B4"/>
</dbReference>
<dbReference type="InterPro" id="IPR041616">
    <property type="entry name" value="PheRS_beta_core"/>
</dbReference>
<dbReference type="InterPro" id="IPR002547">
    <property type="entry name" value="tRNA-bd_dom"/>
</dbReference>
<dbReference type="InterPro" id="IPR033714">
    <property type="entry name" value="tRNA_bind_bactPheRS"/>
</dbReference>
<dbReference type="InterPro" id="IPR005147">
    <property type="entry name" value="tRNA_synthase_B5-dom"/>
</dbReference>
<dbReference type="NCBIfam" id="TIGR00472">
    <property type="entry name" value="pheT_bact"/>
    <property type="match status" value="1"/>
</dbReference>
<dbReference type="PANTHER" id="PTHR10947:SF0">
    <property type="entry name" value="PHENYLALANINE--TRNA LIGASE BETA SUBUNIT"/>
    <property type="match status" value="1"/>
</dbReference>
<dbReference type="PANTHER" id="PTHR10947">
    <property type="entry name" value="PHENYLALANYL-TRNA SYNTHETASE BETA CHAIN AND LEUCINE-RICH REPEAT-CONTAINING PROTEIN 47"/>
    <property type="match status" value="1"/>
</dbReference>
<dbReference type="Pfam" id="PF03483">
    <property type="entry name" value="B3_4"/>
    <property type="match status" value="1"/>
</dbReference>
<dbReference type="Pfam" id="PF03484">
    <property type="entry name" value="B5"/>
    <property type="match status" value="1"/>
</dbReference>
<dbReference type="Pfam" id="PF03147">
    <property type="entry name" value="FDX-ACB"/>
    <property type="match status" value="1"/>
</dbReference>
<dbReference type="Pfam" id="PF01588">
    <property type="entry name" value="tRNA_bind"/>
    <property type="match status" value="1"/>
</dbReference>
<dbReference type="Pfam" id="PF17759">
    <property type="entry name" value="tRNA_synthFbeta"/>
    <property type="match status" value="1"/>
</dbReference>
<dbReference type="SMART" id="SM00873">
    <property type="entry name" value="B3_4"/>
    <property type="match status" value="1"/>
</dbReference>
<dbReference type="SMART" id="SM00874">
    <property type="entry name" value="B5"/>
    <property type="match status" value="1"/>
</dbReference>
<dbReference type="SMART" id="SM00896">
    <property type="entry name" value="FDX-ACB"/>
    <property type="match status" value="1"/>
</dbReference>
<dbReference type="SUPFAM" id="SSF54991">
    <property type="entry name" value="Anticodon-binding domain of PheRS"/>
    <property type="match status" value="1"/>
</dbReference>
<dbReference type="SUPFAM" id="SSF55681">
    <property type="entry name" value="Class II aaRS and biotin synthetases"/>
    <property type="match status" value="1"/>
</dbReference>
<dbReference type="SUPFAM" id="SSF50249">
    <property type="entry name" value="Nucleic acid-binding proteins"/>
    <property type="match status" value="1"/>
</dbReference>
<dbReference type="SUPFAM" id="SSF56037">
    <property type="entry name" value="PheT/TilS domain"/>
    <property type="match status" value="1"/>
</dbReference>
<dbReference type="SUPFAM" id="SSF46955">
    <property type="entry name" value="Putative DNA-binding domain"/>
    <property type="match status" value="1"/>
</dbReference>
<dbReference type="PROSITE" id="PS51483">
    <property type="entry name" value="B5"/>
    <property type="match status" value="1"/>
</dbReference>
<dbReference type="PROSITE" id="PS51447">
    <property type="entry name" value="FDX_ACB"/>
    <property type="match status" value="1"/>
</dbReference>
<dbReference type="PROSITE" id="PS50886">
    <property type="entry name" value="TRBD"/>
    <property type="match status" value="1"/>
</dbReference>
<proteinExistence type="inferred from homology"/>
<gene>
    <name evidence="1" type="primary">pheT</name>
    <name type="ordered locus">AYWB_134</name>
</gene>
<name>SYFB_AYWBP</name>
<evidence type="ECO:0000255" key="1">
    <source>
        <dbReference type="HAMAP-Rule" id="MF_00283"/>
    </source>
</evidence>
<evidence type="ECO:0000256" key="2">
    <source>
        <dbReference type="SAM" id="MobiDB-lite"/>
    </source>
</evidence>
<evidence type="ECO:0000305" key="3"/>